<proteinExistence type="evidence at transcript level"/>
<organism>
    <name type="scientific">Arabidopsis thaliana</name>
    <name type="common">Mouse-ear cress</name>
    <dbReference type="NCBI Taxonomy" id="3702"/>
    <lineage>
        <taxon>Eukaryota</taxon>
        <taxon>Viridiplantae</taxon>
        <taxon>Streptophyta</taxon>
        <taxon>Embryophyta</taxon>
        <taxon>Tracheophyta</taxon>
        <taxon>Spermatophyta</taxon>
        <taxon>Magnoliopsida</taxon>
        <taxon>eudicotyledons</taxon>
        <taxon>Gunneridae</taxon>
        <taxon>Pentapetalae</taxon>
        <taxon>rosids</taxon>
        <taxon>malvids</taxon>
        <taxon>Brassicales</taxon>
        <taxon>Brassicaceae</taxon>
        <taxon>Camelineae</taxon>
        <taxon>Arabidopsis</taxon>
    </lineage>
</organism>
<feature type="chain" id="PRO_0000292597" description="UDP-glucuronate 4-epimerase 2">
    <location>
        <begin position="1"/>
        <end position="434"/>
    </location>
</feature>
<feature type="transmembrane region" description="Helical" evidence="2">
    <location>
        <begin position="32"/>
        <end position="52"/>
    </location>
</feature>
<feature type="transmembrane region" description="Helical" evidence="2">
    <location>
        <begin position="91"/>
        <end position="111"/>
    </location>
</feature>
<feature type="active site" description="Proton acceptor" evidence="1">
    <location>
        <position position="243"/>
    </location>
</feature>
<feature type="binding site" evidence="1">
    <location>
        <begin position="93"/>
        <end position="124"/>
    </location>
    <ligand>
        <name>NAD(+)</name>
        <dbReference type="ChEBI" id="CHEBI:57540"/>
    </ligand>
</feature>
<name>GAE2_ARATH</name>
<reference key="1">
    <citation type="journal article" date="2000" name="Nature">
        <title>Sequence and analysis of chromosome 1 of the plant Arabidopsis thaliana.</title>
        <authorList>
            <person name="Theologis A."/>
            <person name="Ecker J.R."/>
            <person name="Palm C.J."/>
            <person name="Federspiel N.A."/>
            <person name="Kaul S."/>
            <person name="White O."/>
            <person name="Alonso J."/>
            <person name="Altafi H."/>
            <person name="Araujo R."/>
            <person name="Bowman C.L."/>
            <person name="Brooks S.Y."/>
            <person name="Buehler E."/>
            <person name="Chan A."/>
            <person name="Chao Q."/>
            <person name="Chen H."/>
            <person name="Cheuk R.F."/>
            <person name="Chin C.W."/>
            <person name="Chung M.K."/>
            <person name="Conn L."/>
            <person name="Conway A.B."/>
            <person name="Conway A.R."/>
            <person name="Creasy T.H."/>
            <person name="Dewar K."/>
            <person name="Dunn P."/>
            <person name="Etgu P."/>
            <person name="Feldblyum T.V."/>
            <person name="Feng J.-D."/>
            <person name="Fong B."/>
            <person name="Fujii C.Y."/>
            <person name="Gill J.E."/>
            <person name="Goldsmith A.D."/>
            <person name="Haas B."/>
            <person name="Hansen N.F."/>
            <person name="Hughes B."/>
            <person name="Huizar L."/>
            <person name="Hunter J.L."/>
            <person name="Jenkins J."/>
            <person name="Johnson-Hopson C."/>
            <person name="Khan S."/>
            <person name="Khaykin E."/>
            <person name="Kim C.J."/>
            <person name="Koo H.L."/>
            <person name="Kremenetskaia I."/>
            <person name="Kurtz D.B."/>
            <person name="Kwan A."/>
            <person name="Lam B."/>
            <person name="Langin-Hooper S."/>
            <person name="Lee A."/>
            <person name="Lee J.M."/>
            <person name="Lenz C.A."/>
            <person name="Li J.H."/>
            <person name="Li Y.-P."/>
            <person name="Lin X."/>
            <person name="Liu S.X."/>
            <person name="Liu Z.A."/>
            <person name="Luros J.S."/>
            <person name="Maiti R."/>
            <person name="Marziali A."/>
            <person name="Militscher J."/>
            <person name="Miranda M."/>
            <person name="Nguyen M."/>
            <person name="Nierman W.C."/>
            <person name="Osborne B.I."/>
            <person name="Pai G."/>
            <person name="Peterson J."/>
            <person name="Pham P.K."/>
            <person name="Rizzo M."/>
            <person name="Rooney T."/>
            <person name="Rowley D."/>
            <person name="Sakano H."/>
            <person name="Salzberg S.L."/>
            <person name="Schwartz J.R."/>
            <person name="Shinn P."/>
            <person name="Southwick A.M."/>
            <person name="Sun H."/>
            <person name="Tallon L.J."/>
            <person name="Tambunga G."/>
            <person name="Toriumi M.J."/>
            <person name="Town C.D."/>
            <person name="Utterback T."/>
            <person name="Van Aken S."/>
            <person name="Vaysberg M."/>
            <person name="Vysotskaia V.S."/>
            <person name="Walker M."/>
            <person name="Wu D."/>
            <person name="Yu G."/>
            <person name="Fraser C.M."/>
            <person name="Venter J.C."/>
            <person name="Davis R.W."/>
        </authorList>
    </citation>
    <scope>NUCLEOTIDE SEQUENCE [LARGE SCALE GENOMIC DNA]</scope>
    <source>
        <strain>cv. Columbia</strain>
    </source>
</reference>
<reference key="2">
    <citation type="journal article" date="2017" name="Plant J.">
        <title>Araport11: a complete reannotation of the Arabidopsis thaliana reference genome.</title>
        <authorList>
            <person name="Cheng C.Y."/>
            <person name="Krishnakumar V."/>
            <person name="Chan A.P."/>
            <person name="Thibaud-Nissen F."/>
            <person name="Schobel S."/>
            <person name="Town C.D."/>
        </authorList>
    </citation>
    <scope>GENOME REANNOTATION</scope>
    <source>
        <strain>cv. Columbia</strain>
    </source>
</reference>
<reference key="3">
    <citation type="journal article" date="2003" name="Science">
        <title>Empirical analysis of transcriptional activity in the Arabidopsis genome.</title>
        <authorList>
            <person name="Yamada K."/>
            <person name="Lim J."/>
            <person name="Dale J.M."/>
            <person name="Chen H."/>
            <person name="Shinn P."/>
            <person name="Palm C.J."/>
            <person name="Southwick A.M."/>
            <person name="Wu H.C."/>
            <person name="Kim C.J."/>
            <person name="Nguyen M."/>
            <person name="Pham P.K."/>
            <person name="Cheuk R.F."/>
            <person name="Karlin-Newmann G."/>
            <person name="Liu S.X."/>
            <person name="Lam B."/>
            <person name="Sakano H."/>
            <person name="Wu T."/>
            <person name="Yu G."/>
            <person name="Miranda M."/>
            <person name="Quach H.L."/>
            <person name="Tripp M."/>
            <person name="Chang C.H."/>
            <person name="Lee J.M."/>
            <person name="Toriumi M.J."/>
            <person name="Chan M.M."/>
            <person name="Tang C.C."/>
            <person name="Onodera C.S."/>
            <person name="Deng J.M."/>
            <person name="Akiyama K."/>
            <person name="Ansari Y."/>
            <person name="Arakawa T."/>
            <person name="Banh J."/>
            <person name="Banno F."/>
            <person name="Bowser L."/>
            <person name="Brooks S.Y."/>
            <person name="Carninci P."/>
            <person name="Chao Q."/>
            <person name="Choy N."/>
            <person name="Enju A."/>
            <person name="Goldsmith A.D."/>
            <person name="Gurjal M."/>
            <person name="Hansen N.F."/>
            <person name="Hayashizaki Y."/>
            <person name="Johnson-Hopson C."/>
            <person name="Hsuan V.W."/>
            <person name="Iida K."/>
            <person name="Karnes M."/>
            <person name="Khan S."/>
            <person name="Koesema E."/>
            <person name="Ishida J."/>
            <person name="Jiang P.X."/>
            <person name="Jones T."/>
            <person name="Kawai J."/>
            <person name="Kamiya A."/>
            <person name="Meyers C."/>
            <person name="Nakajima M."/>
            <person name="Narusaka M."/>
            <person name="Seki M."/>
            <person name="Sakurai T."/>
            <person name="Satou M."/>
            <person name="Tamse R."/>
            <person name="Vaysberg M."/>
            <person name="Wallender E.K."/>
            <person name="Wong C."/>
            <person name="Yamamura Y."/>
            <person name="Yuan S."/>
            <person name="Shinozaki K."/>
            <person name="Davis R.W."/>
            <person name="Theologis A."/>
            <person name="Ecker J.R."/>
        </authorList>
    </citation>
    <scope>NUCLEOTIDE SEQUENCE [LARGE SCALE MRNA]</scope>
    <source>
        <strain>cv. Columbia</strain>
    </source>
</reference>
<reference key="4">
    <citation type="submission" date="2002-03" db="EMBL/GenBank/DDBJ databases">
        <title>Full-length cDNA from Arabidopsis thaliana.</title>
        <authorList>
            <person name="Brover V.V."/>
            <person name="Troukhan M.E."/>
            <person name="Alexandrov N.A."/>
            <person name="Lu Y.-P."/>
            <person name="Flavell R.B."/>
            <person name="Feldmann K.A."/>
        </authorList>
    </citation>
    <scope>NUCLEOTIDE SEQUENCE [LARGE SCALE MRNA]</scope>
</reference>
<reference key="5">
    <citation type="submission" date="2006-07" db="EMBL/GenBank/DDBJ databases">
        <title>Large-scale analysis of RIKEN Arabidopsis full-length (RAFL) cDNAs.</title>
        <authorList>
            <person name="Totoki Y."/>
            <person name="Seki M."/>
            <person name="Ishida J."/>
            <person name="Nakajima M."/>
            <person name="Enju A."/>
            <person name="Kamiya A."/>
            <person name="Narusaka M."/>
            <person name="Shin-i T."/>
            <person name="Nakagawa M."/>
            <person name="Sakamoto N."/>
            <person name="Oishi K."/>
            <person name="Kohara Y."/>
            <person name="Kobayashi M."/>
            <person name="Toyoda A."/>
            <person name="Sakaki Y."/>
            <person name="Sakurai T."/>
            <person name="Iida K."/>
            <person name="Akiyama K."/>
            <person name="Satou M."/>
            <person name="Toyoda T."/>
            <person name="Konagaya A."/>
            <person name="Carninci P."/>
            <person name="Kawai J."/>
            <person name="Hayashizaki Y."/>
            <person name="Shinozaki K."/>
        </authorList>
    </citation>
    <scope>NUCLEOTIDE SEQUENCE [LARGE SCALE MRNA] OF 143-434</scope>
    <source>
        <strain>cv. Columbia</strain>
    </source>
</reference>
<reference key="6">
    <citation type="journal article" date="2001" name="Plant Mol. Biol.">
        <title>Molecular genetics of nucleotide sugar interconversion pathways in plants.</title>
        <authorList>
            <person name="Reiter W.-D."/>
            <person name="Vanzin G.F."/>
        </authorList>
    </citation>
    <scope>IDENTIFICATION</scope>
    <scope>NOMENCLATURE</scope>
</reference>
<reference key="7">
    <citation type="journal article" date="2004" name="Plant Physiol.">
        <title>The biosynthesis of D-galacturonate in plants. Functional cloning and characterization of a membrane-anchored UDP-D-glucuronate 4-epimerase from Arabidopsis.</title>
        <authorList>
            <person name="Moelhoej M."/>
            <person name="Verma R."/>
            <person name="Reiter W.-D."/>
        </authorList>
    </citation>
    <scope>IDENTIFICATION</scope>
    <scope>TISSUE SPECIFICITY</scope>
</reference>
<reference key="8">
    <citation type="journal article" date="2004" name="FEBS Lett.">
        <title>Identification and characterization of a UDP-D-glucuronate 4-epimerase in Arabidopsis.</title>
        <authorList>
            <person name="Usadel B."/>
            <person name="Schlueter U."/>
            <person name="Moelhoej M."/>
            <person name="Gipmans M."/>
            <person name="Verma R."/>
            <person name="Kossmann J."/>
            <person name="Reiter W.-D."/>
            <person name="Pauly M."/>
        </authorList>
    </citation>
    <scope>TISSUE SPECIFICITY</scope>
</reference>
<evidence type="ECO:0000250" key="1"/>
<evidence type="ECO:0000255" key="2"/>
<evidence type="ECO:0000269" key="3">
    <source>
    </source>
</evidence>
<evidence type="ECO:0000269" key="4">
    <source>
    </source>
</evidence>
<evidence type="ECO:0000305" key="5"/>
<dbReference type="EC" id="5.1.3.6"/>
<dbReference type="EMBL" id="AC020622">
    <property type="protein sequence ID" value="AAF76478.1"/>
    <property type="molecule type" value="Genomic_DNA"/>
</dbReference>
<dbReference type="EMBL" id="CP002684">
    <property type="protein sequence ID" value="AEE27364.1"/>
    <property type="molecule type" value="Genomic_DNA"/>
</dbReference>
<dbReference type="EMBL" id="AF334734">
    <property type="protein sequence ID" value="AAG50112.1"/>
    <property type="molecule type" value="mRNA"/>
</dbReference>
<dbReference type="EMBL" id="AY084754">
    <property type="protein sequence ID" value="AAM61323.1"/>
    <property type="status" value="ALT_INIT"/>
    <property type="molecule type" value="mRNA"/>
</dbReference>
<dbReference type="EMBL" id="AK228396">
    <property type="protein sequence ID" value="BAF00333.1"/>
    <property type="molecule type" value="mRNA"/>
</dbReference>
<dbReference type="PIR" id="A86152">
    <property type="entry name" value="A86152"/>
</dbReference>
<dbReference type="RefSeq" id="NP_171702.1">
    <property type="nucleotide sequence ID" value="NM_100080.4"/>
</dbReference>
<dbReference type="SMR" id="Q9LPC1"/>
<dbReference type="FunCoup" id="Q9LPC1">
    <property type="interactions" value="397"/>
</dbReference>
<dbReference type="STRING" id="3702.Q9LPC1"/>
<dbReference type="iPTMnet" id="Q9LPC1"/>
<dbReference type="PaxDb" id="3702-AT1G02000.1"/>
<dbReference type="ProteomicsDB" id="247384"/>
<dbReference type="EnsemblPlants" id="AT1G02000.1">
    <property type="protein sequence ID" value="AT1G02000.1"/>
    <property type="gene ID" value="AT1G02000"/>
</dbReference>
<dbReference type="GeneID" id="839289"/>
<dbReference type="Gramene" id="AT1G02000.1">
    <property type="protein sequence ID" value="AT1G02000.1"/>
    <property type="gene ID" value="AT1G02000"/>
</dbReference>
<dbReference type="KEGG" id="ath:AT1G02000"/>
<dbReference type="Araport" id="AT1G02000"/>
<dbReference type="TAIR" id="AT1G02000">
    <property type="gene designation" value="GAE2"/>
</dbReference>
<dbReference type="eggNOG" id="KOG1371">
    <property type="taxonomic scope" value="Eukaryota"/>
</dbReference>
<dbReference type="HOGENOM" id="CLU_007383_1_2_1"/>
<dbReference type="InParanoid" id="Q9LPC1"/>
<dbReference type="OMA" id="WYLGYYK"/>
<dbReference type="OrthoDB" id="202470at2759"/>
<dbReference type="PhylomeDB" id="Q9LPC1"/>
<dbReference type="BRENDA" id="5.1.3.6">
    <property type="organism ID" value="399"/>
</dbReference>
<dbReference type="PRO" id="PR:Q9LPC1"/>
<dbReference type="Proteomes" id="UP000006548">
    <property type="component" value="Chromosome 1"/>
</dbReference>
<dbReference type="ExpressionAtlas" id="Q9LPC1">
    <property type="expression patterns" value="baseline and differential"/>
</dbReference>
<dbReference type="GO" id="GO:0032580">
    <property type="term" value="C:Golgi cisterna membrane"/>
    <property type="evidence" value="ECO:0007669"/>
    <property type="project" value="UniProtKB-SubCell"/>
</dbReference>
<dbReference type="GO" id="GO:0050378">
    <property type="term" value="F:UDP-glucuronate 4-epimerase activity"/>
    <property type="evidence" value="ECO:0007669"/>
    <property type="project" value="UniProtKB-EC"/>
</dbReference>
<dbReference type="FunFam" id="3.40.50.720:FF:000198">
    <property type="entry name" value="UDP-glucuronate 4-epimerase 3"/>
    <property type="match status" value="1"/>
</dbReference>
<dbReference type="Gene3D" id="3.40.50.720">
    <property type="entry name" value="NAD(P)-binding Rossmann-like Domain"/>
    <property type="match status" value="1"/>
</dbReference>
<dbReference type="InterPro" id="IPR001509">
    <property type="entry name" value="Epimerase_deHydtase"/>
</dbReference>
<dbReference type="InterPro" id="IPR036291">
    <property type="entry name" value="NAD(P)-bd_dom_sf"/>
</dbReference>
<dbReference type="PANTHER" id="PTHR43574">
    <property type="entry name" value="EPIMERASE-RELATED"/>
    <property type="match status" value="1"/>
</dbReference>
<dbReference type="Pfam" id="PF01370">
    <property type="entry name" value="Epimerase"/>
    <property type="match status" value="1"/>
</dbReference>
<dbReference type="PRINTS" id="PR01713">
    <property type="entry name" value="NUCEPIMERASE"/>
</dbReference>
<dbReference type="SUPFAM" id="SSF51735">
    <property type="entry name" value="NAD(P)-binding Rossmann-fold domains"/>
    <property type="match status" value="1"/>
</dbReference>
<keyword id="KW-0119">Carbohydrate metabolism</keyword>
<keyword id="KW-0333">Golgi apparatus</keyword>
<keyword id="KW-0413">Isomerase</keyword>
<keyword id="KW-0472">Membrane</keyword>
<keyword id="KW-0520">NAD</keyword>
<keyword id="KW-1185">Reference proteome</keyword>
<keyword id="KW-0812">Transmembrane</keyword>
<keyword id="KW-1133">Transmembrane helix</keyword>
<comment type="function">
    <text evidence="1">Involved in the synthesis of the negatively charged monosaccharide that forms the backbone of pectic cell wall components.</text>
</comment>
<comment type="catalytic activity">
    <reaction>
        <text>UDP-alpha-D-glucuronate = UDP-alpha-D-galacturonate</text>
        <dbReference type="Rhea" id="RHEA:11404"/>
        <dbReference type="ChEBI" id="CHEBI:57635"/>
        <dbReference type="ChEBI" id="CHEBI:58052"/>
        <dbReference type="EC" id="5.1.3.6"/>
    </reaction>
</comment>
<comment type="subunit">
    <text evidence="1">Homodimer.</text>
</comment>
<comment type="subcellular location">
    <subcellularLocation>
        <location evidence="5">Golgi apparatus</location>
        <location evidence="5">Golgi stack membrane</location>
        <topology evidence="5">Multi-pass membrane protein</topology>
    </subcellularLocation>
</comment>
<comment type="tissue specificity">
    <text evidence="3 4">In roots, leaves, siliques, flowers, pollen and stems.</text>
</comment>
<comment type="similarity">
    <text evidence="5">Belongs to the NAD(P)-dependent epimerase/dehydratase family.</text>
</comment>
<comment type="sequence caution" evidence="5">
    <conflict type="erroneous initiation">
        <sequence resource="EMBL-CDS" id="AAM61323"/>
    </conflict>
</comment>
<sequence>MSHLDDIPSTPGKFKMMDKSPFFLHRTRWQSSVAKLAFWSLVFFGLLFIFFYRSPISNPDSSRRSLRTYSWGGPAWEKRVRSSARVRTRNGVSVLVTGAAGFVGTHVSAALKRRGDGVLGLDNFNDYYDTSLKRSRQALLERSGVFIVEGDINDLSLLKKLFEVVPFTHVMHLAAQAGVRYAMENPGSYVHSNIAGFVNLLEVCKSANPQPAIVWASSSSVYGLNTKVPFSEKDRTDQPASLYAATKKAGEEIAHTYNHIYGLSLTGLRFFTVYGPWGRPDMAYFFFTRDILKGKAISIFEGANHGTVARDFTYIDDIVKGCLGALDTAEKSTGSGGKKRGAAQLRVFNLGNTSPVPVTDLVSILERLLKVKAKRNMMKLPRNGDVPFTHANISSAQREFGYKPSTDLQTGLKKFVRWYLGYYKQGGKKVAAAA</sequence>
<gene>
    <name type="primary">GAE2</name>
    <name type="ordered locus">At1g02000</name>
    <name type="ORF">F22M8.13</name>
</gene>
<protein>
    <recommendedName>
        <fullName>UDP-glucuronate 4-epimerase 2</fullName>
        <ecNumber>5.1.3.6</ecNumber>
    </recommendedName>
    <alternativeName>
        <fullName>UDP-glucuronic acid epimerase 2</fullName>
    </alternativeName>
</protein>
<accession>Q9LPC1</accession>
<accession>Q0WRB6</accession>
<accession>Q8LFM5</accession>